<proteinExistence type="inferred from homology"/>
<protein>
    <recommendedName>
        <fullName evidence="2">Transcription and mRNA export factor SUS1</fullName>
    </recommendedName>
</protein>
<keyword id="KW-0010">Activator</keyword>
<keyword id="KW-0156">Chromatin regulator</keyword>
<keyword id="KW-0963">Cytoplasm</keyword>
<keyword id="KW-0509">mRNA transport</keyword>
<keyword id="KW-0539">Nucleus</keyword>
<keyword id="KW-0653">Protein transport</keyword>
<keyword id="KW-1185">Reference proteome</keyword>
<keyword id="KW-0804">Transcription</keyword>
<keyword id="KW-0805">Transcription regulation</keyword>
<keyword id="KW-0811">Translocation</keyword>
<keyword id="KW-0813">Transport</keyword>
<accession>A5DG59</accession>
<gene>
    <name evidence="2" type="primary">SUS1</name>
    <name type="ORF">PGUG_02260</name>
</gene>
<name>SUS1_PICGU</name>
<dbReference type="EMBL" id="CH408156">
    <property type="protein sequence ID" value="EDK38162.2"/>
    <property type="molecule type" value="Genomic_DNA"/>
</dbReference>
<dbReference type="RefSeq" id="XP_001486589.1">
    <property type="nucleotide sequence ID" value="XM_001486539.1"/>
</dbReference>
<dbReference type="SMR" id="A5DG59"/>
<dbReference type="FunCoup" id="A5DG59">
    <property type="interactions" value="324"/>
</dbReference>
<dbReference type="STRING" id="294746.A5DG59"/>
<dbReference type="GeneID" id="5128081"/>
<dbReference type="KEGG" id="pgu:PGUG_02260"/>
<dbReference type="VEuPathDB" id="FungiDB:PGUG_02260"/>
<dbReference type="eggNOG" id="ENOG502S9WJ">
    <property type="taxonomic scope" value="Eukaryota"/>
</dbReference>
<dbReference type="HOGENOM" id="CLU_134052_2_1_1"/>
<dbReference type="InParanoid" id="A5DG59"/>
<dbReference type="OMA" id="YESGWFD"/>
<dbReference type="OrthoDB" id="6221744at2759"/>
<dbReference type="Proteomes" id="UP000001997">
    <property type="component" value="Unassembled WGS sequence"/>
</dbReference>
<dbReference type="GO" id="GO:0071819">
    <property type="term" value="C:DUBm complex"/>
    <property type="evidence" value="ECO:0007669"/>
    <property type="project" value="UniProtKB-UniRule"/>
</dbReference>
<dbReference type="GO" id="GO:0005643">
    <property type="term" value="C:nuclear pore"/>
    <property type="evidence" value="ECO:0007669"/>
    <property type="project" value="UniProtKB-UniRule"/>
</dbReference>
<dbReference type="GO" id="GO:0005654">
    <property type="term" value="C:nucleoplasm"/>
    <property type="evidence" value="ECO:0007669"/>
    <property type="project" value="UniProtKB-SubCell"/>
</dbReference>
<dbReference type="GO" id="GO:0000932">
    <property type="term" value="C:P-body"/>
    <property type="evidence" value="ECO:0007669"/>
    <property type="project" value="UniProtKB-SubCell"/>
</dbReference>
<dbReference type="GO" id="GO:0000124">
    <property type="term" value="C:SAGA complex"/>
    <property type="evidence" value="ECO:0007669"/>
    <property type="project" value="UniProtKB-UniRule"/>
</dbReference>
<dbReference type="GO" id="GO:0070390">
    <property type="term" value="C:transcription export complex 2"/>
    <property type="evidence" value="ECO:0007669"/>
    <property type="project" value="UniProtKB-UniRule"/>
</dbReference>
<dbReference type="GO" id="GO:0003713">
    <property type="term" value="F:transcription coactivator activity"/>
    <property type="evidence" value="ECO:0007669"/>
    <property type="project" value="UniProtKB-UniRule"/>
</dbReference>
<dbReference type="GO" id="GO:0006325">
    <property type="term" value="P:chromatin organization"/>
    <property type="evidence" value="ECO:0007669"/>
    <property type="project" value="UniProtKB-KW"/>
</dbReference>
<dbReference type="GO" id="GO:0006406">
    <property type="term" value="P:mRNA export from nucleus"/>
    <property type="evidence" value="ECO:0007669"/>
    <property type="project" value="UniProtKB-UniRule"/>
</dbReference>
<dbReference type="GO" id="GO:0015031">
    <property type="term" value="P:protein transport"/>
    <property type="evidence" value="ECO:0007669"/>
    <property type="project" value="UniProtKB-KW"/>
</dbReference>
<dbReference type="GO" id="GO:0006368">
    <property type="term" value="P:transcription elongation by RNA polymerase II"/>
    <property type="evidence" value="ECO:0007669"/>
    <property type="project" value="UniProtKB-UniRule"/>
</dbReference>
<dbReference type="Gene3D" id="1.10.246.140">
    <property type="match status" value="1"/>
</dbReference>
<dbReference type="HAMAP" id="MF_03046">
    <property type="entry name" value="ENY2_Sus1"/>
    <property type="match status" value="1"/>
</dbReference>
<dbReference type="InterPro" id="IPR018783">
    <property type="entry name" value="TF_ENY2"/>
</dbReference>
<dbReference type="InterPro" id="IPR038212">
    <property type="entry name" value="TF_EnY2_sf"/>
</dbReference>
<dbReference type="PANTHER" id="PTHR12514">
    <property type="entry name" value="ENHANCER OF YELLOW 2 TRANSCRIPTION FACTOR"/>
    <property type="match status" value="1"/>
</dbReference>
<dbReference type="Pfam" id="PF10163">
    <property type="entry name" value="EnY2"/>
    <property type="match status" value="1"/>
</dbReference>
<evidence type="ECO:0000250" key="1"/>
<evidence type="ECO:0000255" key="2">
    <source>
        <dbReference type="HAMAP-Rule" id="MF_03046"/>
    </source>
</evidence>
<feature type="chain" id="PRO_0000367571" description="Transcription and mRNA export factor SUS1">
    <location>
        <begin position="1"/>
        <end position="97"/>
    </location>
</feature>
<organism>
    <name type="scientific">Meyerozyma guilliermondii (strain ATCC 6260 / CBS 566 / DSM 6381 / JCM 1539 / NBRC 10279 / NRRL Y-324)</name>
    <name type="common">Yeast</name>
    <name type="synonym">Candida guilliermondii</name>
    <dbReference type="NCBI Taxonomy" id="294746"/>
    <lineage>
        <taxon>Eukaryota</taxon>
        <taxon>Fungi</taxon>
        <taxon>Dikarya</taxon>
        <taxon>Ascomycota</taxon>
        <taxon>Saccharomycotina</taxon>
        <taxon>Pichiomycetes</taxon>
        <taxon>Debaryomycetaceae</taxon>
        <taxon>Meyerozyma</taxon>
    </lineage>
</organism>
<sequence length="97" mass="11520">MSQDELDQIRAKIQDHLISSGNYELINKQLKLKLYENGWYDKVGQLATTELQQEDNKNLTFERLYAMVKPQAESMVPDEVRQEIMTRIREYLEDVIQ</sequence>
<reference key="1">
    <citation type="journal article" date="2009" name="Nature">
        <title>Evolution of pathogenicity and sexual reproduction in eight Candida genomes.</title>
        <authorList>
            <person name="Butler G."/>
            <person name="Rasmussen M.D."/>
            <person name="Lin M.F."/>
            <person name="Santos M.A.S."/>
            <person name="Sakthikumar S."/>
            <person name="Munro C.A."/>
            <person name="Rheinbay E."/>
            <person name="Grabherr M."/>
            <person name="Forche A."/>
            <person name="Reedy J.L."/>
            <person name="Agrafioti I."/>
            <person name="Arnaud M.B."/>
            <person name="Bates S."/>
            <person name="Brown A.J.P."/>
            <person name="Brunke S."/>
            <person name="Costanzo M.C."/>
            <person name="Fitzpatrick D.A."/>
            <person name="de Groot P.W.J."/>
            <person name="Harris D."/>
            <person name="Hoyer L.L."/>
            <person name="Hube B."/>
            <person name="Klis F.M."/>
            <person name="Kodira C."/>
            <person name="Lennard N."/>
            <person name="Logue M.E."/>
            <person name="Martin R."/>
            <person name="Neiman A.M."/>
            <person name="Nikolaou E."/>
            <person name="Quail M.A."/>
            <person name="Quinn J."/>
            <person name="Santos M.C."/>
            <person name="Schmitzberger F.F."/>
            <person name="Sherlock G."/>
            <person name="Shah P."/>
            <person name="Silverstein K.A.T."/>
            <person name="Skrzypek M.S."/>
            <person name="Soll D."/>
            <person name="Staggs R."/>
            <person name="Stansfield I."/>
            <person name="Stumpf M.P.H."/>
            <person name="Sudbery P.E."/>
            <person name="Srikantha T."/>
            <person name="Zeng Q."/>
            <person name="Berman J."/>
            <person name="Berriman M."/>
            <person name="Heitman J."/>
            <person name="Gow N.A.R."/>
            <person name="Lorenz M.C."/>
            <person name="Birren B.W."/>
            <person name="Kellis M."/>
            <person name="Cuomo C.A."/>
        </authorList>
    </citation>
    <scope>NUCLEOTIDE SEQUENCE [LARGE SCALE GENOMIC DNA]</scope>
    <source>
        <strain>ATCC 6260 / CBS 566 / DSM 6381 / JCM 1539 / NBRC 10279 / NRRL Y-324</strain>
    </source>
</reference>
<comment type="function">
    <text evidence="1">Involved in mRNA export coupled transcription activation by association with both the TREX-2 and the SAGA complexes. At the promoters, SAGA is required for recruitment of the basal transcription machinery. It influences RNA polymerase II transcriptional activity through different activities such as TBP interaction and promoter selectivity, interaction with transcription activators, and chromatin modification through histone acetylation and deubiquitination. Within the SAGA complex, participates in a subcomplex required for deubiquitination of H2B and for the maintenance of steady-state H3 methylation levels. The TREX-2 complex functions in docking export-competent ribonucleoprotein particles (mRNPs) to the nuclear entrance of the nuclear pore complex (nuclear basket). TREX-2 participates in mRNA export and accurate chromatin positioning in the nucleus by tethering genes to the nuclear periphery. May also be involved in cytoplasmic mRNA decay by interaction with components of P-bodies (By similarity).</text>
</comment>
<comment type="subunit">
    <text evidence="2">Component of the nuclear pore complex (NPC)-associated TREX-2 complex (transcription and export complex 2), composed of at least SUS1, SAC3, THP1, SEM1, and CDC31. TREX-2 contains 2 SUS1 chains. The TREX-2 complex interacts with the nucleoporin NUP1. Component of the 1.8 MDa SAGA transcription coactivator-HAT complex. SAGA is built of 5 distinct domains with specialized functions. Within the SAGA complex, SUS1, SGF11, SGF73 and UBP8 form an additional subcomplex of SAGA called the DUB module (deubiquitination module). Interacts directly with THP1, SAC3, SGF11, and with the RNA polymerase II.</text>
</comment>
<comment type="subcellular location">
    <subcellularLocation>
        <location evidence="2">Nucleus</location>
        <location evidence="2">Nucleoplasm</location>
    </subcellularLocation>
    <subcellularLocation>
        <location evidence="2">Cytoplasm</location>
        <location evidence="2">P-body</location>
    </subcellularLocation>
</comment>
<comment type="similarity">
    <text evidence="2">Belongs to the ENY2 family.</text>
</comment>